<gene>
    <name type="primary">pheA</name>
    <name type="ordered locus">Cgl2899</name>
    <name type="ordered locus">cg3207</name>
</gene>
<organism>
    <name type="scientific">Corynebacterium glutamicum (strain ATCC 13032 / DSM 20300 / JCM 1318 / BCRC 11384 / CCUG 27702 / LMG 3730 / NBRC 12168 / NCIMB 10025 / NRRL B-2784 / 534)</name>
    <dbReference type="NCBI Taxonomy" id="196627"/>
    <lineage>
        <taxon>Bacteria</taxon>
        <taxon>Bacillati</taxon>
        <taxon>Actinomycetota</taxon>
        <taxon>Actinomycetes</taxon>
        <taxon>Mycobacteriales</taxon>
        <taxon>Corynebacteriaceae</taxon>
        <taxon>Corynebacterium</taxon>
    </lineage>
</organism>
<evidence type="ECO:0000250" key="1"/>
<evidence type="ECO:0000255" key="2">
    <source>
        <dbReference type="PROSITE-ProRule" id="PRU00517"/>
    </source>
</evidence>
<evidence type="ECO:0000255" key="3">
    <source>
        <dbReference type="PROSITE-ProRule" id="PRU01007"/>
    </source>
</evidence>
<evidence type="ECO:0000305" key="4"/>
<name>PHEA_CORGL</name>
<dbReference type="EC" id="4.2.1.51"/>
<dbReference type="EMBL" id="M13774">
    <property type="protein sequence ID" value="AAA23304.1"/>
    <property type="molecule type" value="Genomic_DNA"/>
</dbReference>
<dbReference type="EMBL" id="BA000036">
    <property type="protein sequence ID" value="BAC00293.1"/>
    <property type="molecule type" value="Genomic_DNA"/>
</dbReference>
<dbReference type="EMBL" id="BX927156">
    <property type="protein sequence ID" value="CAF20922.1"/>
    <property type="molecule type" value="Genomic_DNA"/>
</dbReference>
<dbReference type="PIR" id="A26044">
    <property type="entry name" value="A26044"/>
</dbReference>
<dbReference type="RefSeq" id="NP_602088.1">
    <property type="nucleotide sequence ID" value="NC_003450.3"/>
</dbReference>
<dbReference type="RefSeq" id="WP_003862609.1">
    <property type="nucleotide sequence ID" value="NC_006958.1"/>
</dbReference>
<dbReference type="SMR" id="P10341"/>
<dbReference type="STRING" id="196627.cg3207"/>
<dbReference type="GeneID" id="1020842"/>
<dbReference type="KEGG" id="cgb:cg3207"/>
<dbReference type="KEGG" id="cgl:Cgl2899"/>
<dbReference type="PATRIC" id="fig|196627.13.peg.2829"/>
<dbReference type="eggNOG" id="COG0077">
    <property type="taxonomic scope" value="Bacteria"/>
</dbReference>
<dbReference type="HOGENOM" id="CLU_035008_0_0_11"/>
<dbReference type="OrthoDB" id="9802281at2"/>
<dbReference type="BioCyc" id="CORYNE:G18NG-12517-MONOMER"/>
<dbReference type="SABIO-RK" id="P10341"/>
<dbReference type="UniPathway" id="UPA00121">
    <property type="reaction ID" value="UER00345"/>
</dbReference>
<dbReference type="Proteomes" id="UP000000582">
    <property type="component" value="Chromosome"/>
</dbReference>
<dbReference type="Proteomes" id="UP000001009">
    <property type="component" value="Chromosome"/>
</dbReference>
<dbReference type="GO" id="GO:0005737">
    <property type="term" value="C:cytoplasm"/>
    <property type="evidence" value="ECO:0007669"/>
    <property type="project" value="TreeGrafter"/>
</dbReference>
<dbReference type="GO" id="GO:0004664">
    <property type="term" value="F:prephenate dehydratase activity"/>
    <property type="evidence" value="ECO:0007669"/>
    <property type="project" value="UniProtKB-EC"/>
</dbReference>
<dbReference type="GO" id="GO:0009094">
    <property type="term" value="P:L-phenylalanine biosynthetic process"/>
    <property type="evidence" value="ECO:0007669"/>
    <property type="project" value="UniProtKB-UniPathway"/>
</dbReference>
<dbReference type="CDD" id="cd04905">
    <property type="entry name" value="ACT_CM-PDT"/>
    <property type="match status" value="1"/>
</dbReference>
<dbReference type="CDD" id="cd13632">
    <property type="entry name" value="PBP2_Aa-PDT_like"/>
    <property type="match status" value="1"/>
</dbReference>
<dbReference type="FunFam" id="3.30.70.260:FF:000012">
    <property type="entry name" value="Prephenate dehydratase"/>
    <property type="match status" value="1"/>
</dbReference>
<dbReference type="Gene3D" id="3.30.70.260">
    <property type="match status" value="1"/>
</dbReference>
<dbReference type="Gene3D" id="3.40.190.10">
    <property type="entry name" value="Periplasmic binding protein-like II"/>
    <property type="match status" value="2"/>
</dbReference>
<dbReference type="InterPro" id="IPR045865">
    <property type="entry name" value="ACT-like_dom_sf"/>
</dbReference>
<dbReference type="InterPro" id="IPR002912">
    <property type="entry name" value="ACT_dom"/>
</dbReference>
<dbReference type="InterPro" id="IPR008242">
    <property type="entry name" value="Chor_mutase/pphenate_deHydtase"/>
</dbReference>
<dbReference type="InterPro" id="IPR001086">
    <property type="entry name" value="Preph_deHydtase"/>
</dbReference>
<dbReference type="InterPro" id="IPR018528">
    <property type="entry name" value="Preph_deHydtase_CS"/>
</dbReference>
<dbReference type="NCBIfam" id="NF008865">
    <property type="entry name" value="PRK11898.1"/>
    <property type="match status" value="1"/>
</dbReference>
<dbReference type="PANTHER" id="PTHR21022">
    <property type="entry name" value="PREPHENATE DEHYDRATASE P PROTEIN"/>
    <property type="match status" value="1"/>
</dbReference>
<dbReference type="PANTHER" id="PTHR21022:SF19">
    <property type="entry name" value="PREPHENATE DEHYDRATASE-RELATED"/>
    <property type="match status" value="1"/>
</dbReference>
<dbReference type="Pfam" id="PF01842">
    <property type="entry name" value="ACT"/>
    <property type="match status" value="1"/>
</dbReference>
<dbReference type="Pfam" id="PF00800">
    <property type="entry name" value="PDT"/>
    <property type="match status" value="1"/>
</dbReference>
<dbReference type="PIRSF" id="PIRSF001500">
    <property type="entry name" value="Chor_mut_pdt_Ppr"/>
    <property type="match status" value="1"/>
</dbReference>
<dbReference type="SUPFAM" id="SSF55021">
    <property type="entry name" value="ACT-like"/>
    <property type="match status" value="1"/>
</dbReference>
<dbReference type="SUPFAM" id="SSF53850">
    <property type="entry name" value="Periplasmic binding protein-like II"/>
    <property type="match status" value="1"/>
</dbReference>
<dbReference type="PROSITE" id="PS51671">
    <property type="entry name" value="ACT"/>
    <property type="match status" value="1"/>
</dbReference>
<dbReference type="PROSITE" id="PS00857">
    <property type="entry name" value="PREPHENATE_DEHYDR_1"/>
    <property type="match status" value="1"/>
</dbReference>
<dbReference type="PROSITE" id="PS00858">
    <property type="entry name" value="PREPHENATE_DEHYDR_2"/>
    <property type="match status" value="1"/>
</dbReference>
<dbReference type="PROSITE" id="PS51171">
    <property type="entry name" value="PREPHENATE_DEHYDR_3"/>
    <property type="match status" value="1"/>
</dbReference>
<keyword id="KW-0028">Amino-acid biosynthesis</keyword>
<keyword id="KW-0057">Aromatic amino acid biosynthesis</keyword>
<keyword id="KW-0456">Lyase</keyword>
<keyword id="KW-0584">Phenylalanine biosynthesis</keyword>
<keyword id="KW-1185">Reference proteome</keyword>
<sequence length="315" mass="33740">MSDAPTVVAYLGPAGTFTEEALYKFADAGVFGDGEIEQLPAKSPQEAVDAVRHGTAQFAVVAIENFVDGPVTPTFDALDQGSNVQIIAEEELDIAFSIMVRPGTSLADVKTLATHPVGYQQVKNWMATTIPDAMYLSASSNGAGAQMVAEGTADAAAAPSRAAELFGLERLVDDVADVRGARTRFVAVQAQAAVSEPTGHDRTSVIFSLPNVPGSLVRALNEFAIRGVDLTRIESRPTRKVFGTYRFHLDISGHIRDIPVAEALRALHLQAEELVFVGSWPSNRAEDSTPQTDQLAKLHKADEWVRAASEGRKLN</sequence>
<feature type="chain" id="PRO_0000119177" description="Prephenate dehydratase">
    <location>
        <begin position="1"/>
        <end position="315"/>
    </location>
</feature>
<feature type="domain" description="Prephenate dehydratase" evidence="2">
    <location>
        <begin position="7"/>
        <end position="190"/>
    </location>
</feature>
<feature type="domain" description="ACT" evidence="3">
    <location>
        <begin position="204"/>
        <end position="283"/>
    </location>
</feature>
<feature type="site" description="Essential for activity" evidence="1">
    <location>
        <position position="183"/>
    </location>
</feature>
<feature type="sequence conflict" description="In Ref. 1; AAA23304." evidence="4" ref="1">
    <original>M</original>
    <variation>S</variation>
    <location>
        <position position="99"/>
    </location>
</feature>
<feature type="sequence conflict" description="In Ref. 1; AAA23304." evidence="4" ref="1">
    <original>A</original>
    <variation>G</variation>
    <location>
        <position position="224"/>
    </location>
</feature>
<proteinExistence type="predicted"/>
<reference key="1">
    <citation type="journal article" date="1986" name="J. Bacteriol.">
        <title>Molecular cloning and nucleotide sequence of the Corynebacterium glutamicum pheA gene.</title>
        <authorList>
            <person name="Follettie M.T."/>
            <person name="Sinskey A.J."/>
        </authorList>
    </citation>
    <scope>NUCLEOTIDE SEQUENCE [GENOMIC DNA]</scope>
</reference>
<reference key="2">
    <citation type="journal article" date="2003" name="Appl. Microbiol. Biotechnol.">
        <title>The Corynebacterium glutamicum genome: features and impacts on biotechnological processes.</title>
        <authorList>
            <person name="Ikeda M."/>
            <person name="Nakagawa S."/>
        </authorList>
    </citation>
    <scope>NUCLEOTIDE SEQUENCE [LARGE SCALE GENOMIC DNA]</scope>
    <source>
        <strain>ATCC 13032 / DSM 20300 / JCM 1318 / BCRC 11384 / CCUG 27702 / LMG 3730 / NBRC 12168 / NCIMB 10025 / NRRL B-2784 / 534</strain>
    </source>
</reference>
<reference key="3">
    <citation type="journal article" date="2003" name="J. Biotechnol.">
        <title>The complete Corynebacterium glutamicum ATCC 13032 genome sequence and its impact on the production of L-aspartate-derived amino acids and vitamins.</title>
        <authorList>
            <person name="Kalinowski J."/>
            <person name="Bathe B."/>
            <person name="Bartels D."/>
            <person name="Bischoff N."/>
            <person name="Bott M."/>
            <person name="Burkovski A."/>
            <person name="Dusch N."/>
            <person name="Eggeling L."/>
            <person name="Eikmanns B.J."/>
            <person name="Gaigalat L."/>
            <person name="Goesmann A."/>
            <person name="Hartmann M."/>
            <person name="Huthmacher K."/>
            <person name="Kraemer R."/>
            <person name="Linke B."/>
            <person name="McHardy A.C."/>
            <person name="Meyer F."/>
            <person name="Moeckel B."/>
            <person name="Pfefferle W."/>
            <person name="Puehler A."/>
            <person name="Rey D.A."/>
            <person name="Rueckert C."/>
            <person name="Rupp O."/>
            <person name="Sahm H."/>
            <person name="Wendisch V.F."/>
            <person name="Wiegraebe I."/>
            <person name="Tauch A."/>
        </authorList>
    </citation>
    <scope>NUCLEOTIDE SEQUENCE [LARGE SCALE GENOMIC DNA]</scope>
    <source>
        <strain>ATCC 13032 / DSM 20300 / JCM 1318 / BCRC 11384 / CCUG 27702 / LMG 3730 / NBRC 12168 / NCIMB 10025 / NRRL B-2784 / 534</strain>
    </source>
</reference>
<protein>
    <recommendedName>
        <fullName>Prephenate dehydratase</fullName>
        <shortName>PDT</shortName>
        <ecNumber>4.2.1.51</ecNumber>
    </recommendedName>
</protein>
<accession>P10341</accession>
<comment type="catalytic activity">
    <reaction>
        <text>prephenate + H(+) = 3-phenylpyruvate + CO2 + H2O</text>
        <dbReference type="Rhea" id="RHEA:21648"/>
        <dbReference type="ChEBI" id="CHEBI:15377"/>
        <dbReference type="ChEBI" id="CHEBI:15378"/>
        <dbReference type="ChEBI" id="CHEBI:16526"/>
        <dbReference type="ChEBI" id="CHEBI:18005"/>
        <dbReference type="ChEBI" id="CHEBI:29934"/>
        <dbReference type="EC" id="4.2.1.51"/>
    </reaction>
</comment>
<comment type="pathway">
    <text>Amino-acid biosynthesis; L-phenylalanine biosynthesis; phenylpyruvate from prephenate: step 1/1.</text>
</comment>